<comment type="function">
    <text evidence="1">Catalyzes the reversible interconversion of serine and glycine with tetrahydrofolate (THF) serving as the one-carbon carrier. This reaction serves as the major source of one-carbon groups required for the biosynthesis of purines, thymidylate, methionine, and other important biomolecules. Also exhibits THF-independent aldolase activity toward beta-hydroxyamino acids, producing glycine and aldehydes, via a retro-aldol mechanism.</text>
</comment>
<comment type="catalytic activity">
    <reaction evidence="1">
        <text>(6R)-5,10-methylene-5,6,7,8-tetrahydrofolate + glycine + H2O = (6S)-5,6,7,8-tetrahydrofolate + L-serine</text>
        <dbReference type="Rhea" id="RHEA:15481"/>
        <dbReference type="ChEBI" id="CHEBI:15377"/>
        <dbReference type="ChEBI" id="CHEBI:15636"/>
        <dbReference type="ChEBI" id="CHEBI:33384"/>
        <dbReference type="ChEBI" id="CHEBI:57305"/>
        <dbReference type="ChEBI" id="CHEBI:57453"/>
        <dbReference type="EC" id="2.1.2.1"/>
    </reaction>
</comment>
<comment type="cofactor">
    <cofactor evidence="1">
        <name>pyridoxal 5'-phosphate</name>
        <dbReference type="ChEBI" id="CHEBI:597326"/>
    </cofactor>
</comment>
<comment type="pathway">
    <text evidence="1">One-carbon metabolism; tetrahydrofolate interconversion.</text>
</comment>
<comment type="pathway">
    <text evidence="1">Amino-acid biosynthesis; glycine biosynthesis; glycine from L-serine: step 1/1.</text>
</comment>
<comment type="subunit">
    <text evidence="1">Homodimer.</text>
</comment>
<comment type="subcellular location">
    <subcellularLocation>
        <location evidence="1">Cytoplasm</location>
    </subcellularLocation>
</comment>
<comment type="similarity">
    <text evidence="1">Belongs to the SHMT family.</text>
</comment>
<feature type="chain" id="PRO_0000113523" description="Serine hydroxymethyltransferase">
    <location>
        <begin position="1"/>
        <end position="417"/>
    </location>
</feature>
<feature type="binding site" evidence="1">
    <location>
        <position position="120"/>
    </location>
    <ligand>
        <name>(6S)-5,6,7,8-tetrahydrofolate</name>
        <dbReference type="ChEBI" id="CHEBI:57453"/>
    </ligand>
</feature>
<feature type="binding site" evidence="1">
    <location>
        <begin position="124"/>
        <end position="126"/>
    </location>
    <ligand>
        <name>(6S)-5,6,7,8-tetrahydrofolate</name>
        <dbReference type="ChEBI" id="CHEBI:57453"/>
    </ligand>
</feature>
<feature type="binding site" evidence="1">
    <location>
        <begin position="354"/>
        <end position="356"/>
    </location>
    <ligand>
        <name>(6S)-5,6,7,8-tetrahydrofolate</name>
        <dbReference type="ChEBI" id="CHEBI:57453"/>
    </ligand>
</feature>
<feature type="site" description="Plays an important role in substrate specificity" evidence="1">
    <location>
        <position position="228"/>
    </location>
</feature>
<feature type="modified residue" description="N6-(pyridoxal phosphate)lysine" evidence="1">
    <location>
        <position position="229"/>
    </location>
</feature>
<organism>
    <name type="scientific">Acinetobacter radioresistens</name>
    <dbReference type="NCBI Taxonomy" id="40216"/>
    <lineage>
        <taxon>Bacteria</taxon>
        <taxon>Pseudomonadati</taxon>
        <taxon>Pseudomonadota</taxon>
        <taxon>Gammaproteobacteria</taxon>
        <taxon>Moraxellales</taxon>
        <taxon>Moraxellaceae</taxon>
        <taxon>Acinetobacter</taxon>
    </lineage>
</organism>
<protein>
    <recommendedName>
        <fullName evidence="1">Serine hydroxymethyltransferase</fullName>
        <shortName evidence="1">SHMT</shortName>
        <shortName evidence="1">Serine methylase</shortName>
        <ecNumber evidence="1">2.1.2.1</ecNumber>
    </recommendedName>
</protein>
<proteinExistence type="inferred from homology"/>
<sequence>MFANISIAEFDPELAQAITNEDARQEAHIELIASENYCSPAVMEAQGSKLTNKYAEGYPGKRYYGGCEYVDIIEQLAIDRAKELFGADYANVQPHAGSQANSAVYLALLNPGDTVLGMSLAHGGHLTHGAKVSFSGKTYNAIQYGLNPETGEIDYEEVERLALEHKPRMIVAGFSAYSQIVDWQRFRDIADKIGAYLFVDMAHVAGLVAAGVYPNPVQIADVTTTTTHKTLRGPRSGLILAKANEEIEKKLQSAVFPGNQGGPLVHAVAAKAICFKEAMAPEYKAYQQQVVKNAQAMAEVLIERGYDVVSGGTKNHLFLLSLIKQDITGKDADAWLGAAHITVNKNSVPNDPRSPFVTSGIRIGTPAVTTRGFGEAEVRDLASWIADILDSKGDEAVINTVKAKVEAVCAKFPVYAK</sequence>
<reference key="1">
    <citation type="journal article" date="1999" name="FEMS Microbiol. Lett.">
        <title>Cloning and complete nucleotide sequence of Acinetobacter radioresistens CMC-1 AglyA gene encoding serine hydroxymethyltransferase.</title>
        <authorList>
            <person name="Hong M.C."/>
            <person name="Wu M.L."/>
            <person name="Chang M.C."/>
        </authorList>
    </citation>
    <scope>NUCLEOTIDE SEQUENCE [GENOMIC DNA]</scope>
    <source>
        <strain>CMC-1</strain>
    </source>
</reference>
<gene>
    <name evidence="1" type="primary">glyA</name>
</gene>
<keyword id="KW-0028">Amino-acid biosynthesis</keyword>
<keyword id="KW-0963">Cytoplasm</keyword>
<keyword id="KW-0554">One-carbon metabolism</keyword>
<keyword id="KW-0663">Pyridoxal phosphate</keyword>
<keyword id="KW-0808">Transferase</keyword>
<accession>O85718</accession>
<accession>Q4LDM9</accession>
<evidence type="ECO:0000255" key="1">
    <source>
        <dbReference type="HAMAP-Rule" id="MF_00051"/>
    </source>
</evidence>
<dbReference type="EC" id="2.1.2.1" evidence="1"/>
<dbReference type="EMBL" id="AF073953">
    <property type="protein sequence ID" value="AAQ13463.1"/>
    <property type="molecule type" value="Genomic_DNA"/>
</dbReference>
<dbReference type="SMR" id="O85718"/>
<dbReference type="STRING" id="40216.GCA_001917365_01538"/>
<dbReference type="UniPathway" id="UPA00193"/>
<dbReference type="UniPathway" id="UPA00288">
    <property type="reaction ID" value="UER01023"/>
</dbReference>
<dbReference type="GO" id="GO:0005829">
    <property type="term" value="C:cytosol"/>
    <property type="evidence" value="ECO:0007669"/>
    <property type="project" value="TreeGrafter"/>
</dbReference>
<dbReference type="GO" id="GO:0004372">
    <property type="term" value="F:glycine hydroxymethyltransferase activity"/>
    <property type="evidence" value="ECO:0007669"/>
    <property type="project" value="UniProtKB-UniRule"/>
</dbReference>
<dbReference type="GO" id="GO:0030170">
    <property type="term" value="F:pyridoxal phosphate binding"/>
    <property type="evidence" value="ECO:0007669"/>
    <property type="project" value="UniProtKB-UniRule"/>
</dbReference>
<dbReference type="GO" id="GO:0019264">
    <property type="term" value="P:glycine biosynthetic process from serine"/>
    <property type="evidence" value="ECO:0007669"/>
    <property type="project" value="UniProtKB-UniRule"/>
</dbReference>
<dbReference type="GO" id="GO:0035999">
    <property type="term" value="P:tetrahydrofolate interconversion"/>
    <property type="evidence" value="ECO:0007669"/>
    <property type="project" value="UniProtKB-UniRule"/>
</dbReference>
<dbReference type="CDD" id="cd00378">
    <property type="entry name" value="SHMT"/>
    <property type="match status" value="1"/>
</dbReference>
<dbReference type="FunFam" id="3.40.640.10:FF:000001">
    <property type="entry name" value="Serine hydroxymethyltransferase"/>
    <property type="match status" value="1"/>
</dbReference>
<dbReference type="FunFam" id="3.90.1150.10:FF:000003">
    <property type="entry name" value="Serine hydroxymethyltransferase"/>
    <property type="match status" value="1"/>
</dbReference>
<dbReference type="Gene3D" id="3.90.1150.10">
    <property type="entry name" value="Aspartate Aminotransferase, domain 1"/>
    <property type="match status" value="1"/>
</dbReference>
<dbReference type="Gene3D" id="3.40.640.10">
    <property type="entry name" value="Type I PLP-dependent aspartate aminotransferase-like (Major domain)"/>
    <property type="match status" value="1"/>
</dbReference>
<dbReference type="HAMAP" id="MF_00051">
    <property type="entry name" value="SHMT"/>
    <property type="match status" value="1"/>
</dbReference>
<dbReference type="InterPro" id="IPR015424">
    <property type="entry name" value="PyrdxlP-dep_Trfase"/>
</dbReference>
<dbReference type="InterPro" id="IPR015421">
    <property type="entry name" value="PyrdxlP-dep_Trfase_major"/>
</dbReference>
<dbReference type="InterPro" id="IPR015422">
    <property type="entry name" value="PyrdxlP-dep_Trfase_small"/>
</dbReference>
<dbReference type="InterPro" id="IPR001085">
    <property type="entry name" value="Ser_HO-MeTrfase"/>
</dbReference>
<dbReference type="InterPro" id="IPR049943">
    <property type="entry name" value="Ser_HO-MeTrfase-like"/>
</dbReference>
<dbReference type="InterPro" id="IPR019798">
    <property type="entry name" value="Ser_HO-MeTrfase_PLP_BS"/>
</dbReference>
<dbReference type="InterPro" id="IPR039429">
    <property type="entry name" value="SHMT-like_dom"/>
</dbReference>
<dbReference type="NCBIfam" id="NF000586">
    <property type="entry name" value="PRK00011.1"/>
    <property type="match status" value="1"/>
</dbReference>
<dbReference type="PANTHER" id="PTHR11680">
    <property type="entry name" value="SERINE HYDROXYMETHYLTRANSFERASE"/>
    <property type="match status" value="1"/>
</dbReference>
<dbReference type="PANTHER" id="PTHR11680:SF50">
    <property type="entry name" value="SERINE HYDROXYMETHYLTRANSFERASE"/>
    <property type="match status" value="1"/>
</dbReference>
<dbReference type="Pfam" id="PF00464">
    <property type="entry name" value="SHMT"/>
    <property type="match status" value="1"/>
</dbReference>
<dbReference type="PIRSF" id="PIRSF000412">
    <property type="entry name" value="SHMT"/>
    <property type="match status" value="1"/>
</dbReference>
<dbReference type="SUPFAM" id="SSF53383">
    <property type="entry name" value="PLP-dependent transferases"/>
    <property type="match status" value="1"/>
</dbReference>
<dbReference type="PROSITE" id="PS00096">
    <property type="entry name" value="SHMT"/>
    <property type="match status" value="1"/>
</dbReference>
<name>GLYA_ACIRA</name>